<gene>
    <name evidence="1" type="primary">msrA</name>
    <name type="ordered locus">UU289</name>
</gene>
<reference key="1">
    <citation type="journal article" date="2000" name="Nature">
        <title>The complete sequence of the mucosal pathogen Ureaplasma urealyticum.</title>
        <authorList>
            <person name="Glass J.I."/>
            <person name="Lefkowitz E.J."/>
            <person name="Glass J.S."/>
            <person name="Heiner C.R."/>
            <person name="Chen E.Y."/>
            <person name="Cassell G.H."/>
        </authorList>
    </citation>
    <scope>NUCLEOTIDE SEQUENCE [LARGE SCALE GENOMIC DNA]</scope>
    <source>
        <strain>ATCC 700970</strain>
    </source>
</reference>
<comment type="function">
    <text evidence="1">Has an important function as a repair enzyme for proteins that have been inactivated by oxidation. Catalyzes the reversible oxidation-reduction of methionine sulfoxide in proteins to methionine.</text>
</comment>
<comment type="catalytic activity">
    <reaction evidence="1">
        <text>L-methionyl-[protein] + [thioredoxin]-disulfide + H2O = L-methionyl-(S)-S-oxide-[protein] + [thioredoxin]-dithiol</text>
        <dbReference type="Rhea" id="RHEA:14217"/>
        <dbReference type="Rhea" id="RHEA-COMP:10698"/>
        <dbReference type="Rhea" id="RHEA-COMP:10700"/>
        <dbReference type="Rhea" id="RHEA-COMP:12313"/>
        <dbReference type="Rhea" id="RHEA-COMP:12315"/>
        <dbReference type="ChEBI" id="CHEBI:15377"/>
        <dbReference type="ChEBI" id="CHEBI:16044"/>
        <dbReference type="ChEBI" id="CHEBI:29950"/>
        <dbReference type="ChEBI" id="CHEBI:44120"/>
        <dbReference type="ChEBI" id="CHEBI:50058"/>
        <dbReference type="EC" id="1.8.4.11"/>
    </reaction>
</comment>
<comment type="catalytic activity">
    <reaction evidence="1">
        <text>[thioredoxin]-disulfide + L-methionine + H2O = L-methionine (S)-S-oxide + [thioredoxin]-dithiol</text>
        <dbReference type="Rhea" id="RHEA:19993"/>
        <dbReference type="Rhea" id="RHEA-COMP:10698"/>
        <dbReference type="Rhea" id="RHEA-COMP:10700"/>
        <dbReference type="ChEBI" id="CHEBI:15377"/>
        <dbReference type="ChEBI" id="CHEBI:29950"/>
        <dbReference type="ChEBI" id="CHEBI:50058"/>
        <dbReference type="ChEBI" id="CHEBI:57844"/>
        <dbReference type="ChEBI" id="CHEBI:58772"/>
        <dbReference type="EC" id="1.8.4.11"/>
    </reaction>
</comment>
<comment type="similarity">
    <text evidence="1">Belongs to the MsrA Met sulfoxide reductase family.</text>
</comment>
<feature type="chain" id="PRO_0000138606" description="Peptide methionine sulfoxide reductase MsrA">
    <location>
        <begin position="1"/>
        <end position="165"/>
    </location>
</feature>
<feature type="active site" evidence="1">
    <location>
        <position position="11"/>
    </location>
</feature>
<evidence type="ECO:0000255" key="1">
    <source>
        <dbReference type="HAMAP-Rule" id="MF_01401"/>
    </source>
</evidence>
<protein>
    <recommendedName>
        <fullName evidence="1">Peptide methionine sulfoxide reductase MsrA</fullName>
        <shortName evidence="1">Protein-methionine-S-oxide reductase</shortName>
        <ecNumber evidence="1">1.8.4.11</ecNumber>
    </recommendedName>
    <alternativeName>
        <fullName evidence="1">Peptide-methionine (S)-S-oxide reductase</fullName>
        <shortName evidence="1">Peptide Met(O) reductase</shortName>
    </alternativeName>
</protein>
<organism>
    <name type="scientific">Ureaplasma parvum serovar 3 (strain ATCC 700970)</name>
    <dbReference type="NCBI Taxonomy" id="273119"/>
    <lineage>
        <taxon>Bacteria</taxon>
        <taxon>Bacillati</taxon>
        <taxon>Mycoplasmatota</taxon>
        <taxon>Mycoplasmoidales</taxon>
        <taxon>Mycoplasmoidaceae</taxon>
        <taxon>Ureaplasma</taxon>
    </lineage>
</organism>
<proteinExistence type="inferred from homology"/>
<dbReference type="EC" id="1.8.4.11" evidence="1"/>
<dbReference type="EMBL" id="AF222894">
    <property type="protein sequence ID" value="AAF30698.1"/>
    <property type="molecule type" value="Genomic_DNA"/>
</dbReference>
<dbReference type="RefSeq" id="WP_006688929.1">
    <property type="nucleotide sequence ID" value="NC_002162.1"/>
</dbReference>
<dbReference type="SMR" id="Q9PQK2"/>
<dbReference type="STRING" id="273119.UU289"/>
<dbReference type="EnsemblBacteria" id="AAF30698">
    <property type="protein sequence ID" value="AAF30698"/>
    <property type="gene ID" value="UU289"/>
</dbReference>
<dbReference type="GeneID" id="29672509"/>
<dbReference type="KEGG" id="uur:UU289"/>
<dbReference type="eggNOG" id="COG0225">
    <property type="taxonomic scope" value="Bacteria"/>
</dbReference>
<dbReference type="HOGENOM" id="CLU_031040_10_2_14"/>
<dbReference type="OrthoDB" id="4174719at2"/>
<dbReference type="Proteomes" id="UP000000423">
    <property type="component" value="Chromosome"/>
</dbReference>
<dbReference type="GO" id="GO:0005737">
    <property type="term" value="C:cytoplasm"/>
    <property type="evidence" value="ECO:0007669"/>
    <property type="project" value="TreeGrafter"/>
</dbReference>
<dbReference type="GO" id="GO:0036456">
    <property type="term" value="F:L-methionine-(S)-S-oxide reductase activity"/>
    <property type="evidence" value="ECO:0007669"/>
    <property type="project" value="TreeGrafter"/>
</dbReference>
<dbReference type="GO" id="GO:0008113">
    <property type="term" value="F:peptide-methionine (S)-S-oxide reductase activity"/>
    <property type="evidence" value="ECO:0007669"/>
    <property type="project" value="UniProtKB-UniRule"/>
</dbReference>
<dbReference type="GO" id="GO:0034599">
    <property type="term" value="P:cellular response to oxidative stress"/>
    <property type="evidence" value="ECO:0007669"/>
    <property type="project" value="TreeGrafter"/>
</dbReference>
<dbReference type="GO" id="GO:0036211">
    <property type="term" value="P:protein modification process"/>
    <property type="evidence" value="ECO:0007669"/>
    <property type="project" value="UniProtKB-UniRule"/>
</dbReference>
<dbReference type="Gene3D" id="3.30.1060.10">
    <property type="entry name" value="Peptide methionine sulphoxide reductase MsrA"/>
    <property type="match status" value="1"/>
</dbReference>
<dbReference type="HAMAP" id="MF_01401">
    <property type="entry name" value="MsrA"/>
    <property type="match status" value="1"/>
</dbReference>
<dbReference type="InterPro" id="IPR002569">
    <property type="entry name" value="Met_Sox_Rdtase_MsrA_dom"/>
</dbReference>
<dbReference type="InterPro" id="IPR036509">
    <property type="entry name" value="Met_Sox_Rdtase_MsrA_sf"/>
</dbReference>
<dbReference type="InterPro" id="IPR050162">
    <property type="entry name" value="MsrA_MetSO_reductase"/>
</dbReference>
<dbReference type="NCBIfam" id="TIGR00401">
    <property type="entry name" value="msrA"/>
    <property type="match status" value="1"/>
</dbReference>
<dbReference type="PANTHER" id="PTHR42799">
    <property type="entry name" value="MITOCHONDRIAL PEPTIDE METHIONINE SULFOXIDE REDUCTASE"/>
    <property type="match status" value="1"/>
</dbReference>
<dbReference type="PANTHER" id="PTHR42799:SF2">
    <property type="entry name" value="MITOCHONDRIAL PEPTIDE METHIONINE SULFOXIDE REDUCTASE"/>
    <property type="match status" value="1"/>
</dbReference>
<dbReference type="Pfam" id="PF01625">
    <property type="entry name" value="PMSR"/>
    <property type="match status" value="1"/>
</dbReference>
<dbReference type="SUPFAM" id="SSF55068">
    <property type="entry name" value="Peptide methionine sulfoxide reductase"/>
    <property type="match status" value="1"/>
</dbReference>
<keyword id="KW-0560">Oxidoreductase</keyword>
<keyword id="KW-1185">Reference proteome</keyword>
<accession>Q9PQK2</accession>
<name>MSRA_UREPA</name>
<sequence>MIKSIWIAGGCFWGIQKYFDSIIGVNHTVVGYSQGNVINPSYEQVCTQTTNHTETVQIDYDDRFVSLISILEHLYQIIDPFSLNKQGDDVGSQYRSGIYYVDHDDEFIIKDFLLKKQNQTPKKIMIEVERLRNFNIAEEYHQKYLDKNPNSYCHVDLSLSKKEFR</sequence>